<sequence length="155" mass="17971">MRRRKAPVREVLGDPVYGNKVVTKFINKMMFDGKKSVAEKIIYKAFNKIEEKSGEKGIEVFEKALERVRPLVEVRSRRVGGATYQVPVEVRASRQQSLSIRWILEATRKRNERMMVDRLANELMDAASDKGAAFKKKEDVHKMAEANKAFAHYRW</sequence>
<feature type="chain" id="PRO_1000125954" description="Small ribosomal subunit protein uS7">
    <location>
        <begin position="1"/>
        <end position="155"/>
    </location>
</feature>
<evidence type="ECO:0000255" key="1">
    <source>
        <dbReference type="HAMAP-Rule" id="MF_00480"/>
    </source>
</evidence>
<evidence type="ECO:0000305" key="2"/>
<proteinExistence type="inferred from homology"/>
<accession>B6JN35</accession>
<reference key="1">
    <citation type="submission" date="2008-10" db="EMBL/GenBank/DDBJ databases">
        <title>The complete genome sequence of Helicobacter pylori strain P12.</title>
        <authorList>
            <person name="Fischer W."/>
            <person name="Windhager L."/>
            <person name="Karnholz A."/>
            <person name="Zeiller M."/>
            <person name="Zimmer R."/>
            <person name="Haas R."/>
        </authorList>
    </citation>
    <scope>NUCLEOTIDE SEQUENCE [LARGE SCALE GENOMIC DNA]</scope>
    <source>
        <strain>P12</strain>
    </source>
</reference>
<dbReference type="EMBL" id="CP001217">
    <property type="protein sequence ID" value="ACJ08313.1"/>
    <property type="molecule type" value="Genomic_DNA"/>
</dbReference>
<dbReference type="SMR" id="B6JN35"/>
<dbReference type="KEGG" id="hpp:HPP12_1161"/>
<dbReference type="HOGENOM" id="CLU_072226_1_1_7"/>
<dbReference type="Proteomes" id="UP000008198">
    <property type="component" value="Chromosome"/>
</dbReference>
<dbReference type="GO" id="GO:0015935">
    <property type="term" value="C:small ribosomal subunit"/>
    <property type="evidence" value="ECO:0007669"/>
    <property type="project" value="InterPro"/>
</dbReference>
<dbReference type="GO" id="GO:0019843">
    <property type="term" value="F:rRNA binding"/>
    <property type="evidence" value="ECO:0007669"/>
    <property type="project" value="UniProtKB-UniRule"/>
</dbReference>
<dbReference type="GO" id="GO:0003735">
    <property type="term" value="F:structural constituent of ribosome"/>
    <property type="evidence" value="ECO:0007669"/>
    <property type="project" value="InterPro"/>
</dbReference>
<dbReference type="GO" id="GO:0000049">
    <property type="term" value="F:tRNA binding"/>
    <property type="evidence" value="ECO:0007669"/>
    <property type="project" value="UniProtKB-UniRule"/>
</dbReference>
<dbReference type="GO" id="GO:0006412">
    <property type="term" value="P:translation"/>
    <property type="evidence" value="ECO:0007669"/>
    <property type="project" value="UniProtKB-UniRule"/>
</dbReference>
<dbReference type="CDD" id="cd14869">
    <property type="entry name" value="uS7_Bacteria"/>
    <property type="match status" value="1"/>
</dbReference>
<dbReference type="FunFam" id="1.10.455.10:FF:000001">
    <property type="entry name" value="30S ribosomal protein S7"/>
    <property type="match status" value="1"/>
</dbReference>
<dbReference type="Gene3D" id="1.10.455.10">
    <property type="entry name" value="Ribosomal protein S7 domain"/>
    <property type="match status" value="1"/>
</dbReference>
<dbReference type="HAMAP" id="MF_00480_B">
    <property type="entry name" value="Ribosomal_uS7_B"/>
    <property type="match status" value="1"/>
</dbReference>
<dbReference type="InterPro" id="IPR000235">
    <property type="entry name" value="Ribosomal_uS7"/>
</dbReference>
<dbReference type="InterPro" id="IPR005717">
    <property type="entry name" value="Ribosomal_uS7_bac/org-type"/>
</dbReference>
<dbReference type="InterPro" id="IPR020606">
    <property type="entry name" value="Ribosomal_uS7_CS"/>
</dbReference>
<dbReference type="InterPro" id="IPR023798">
    <property type="entry name" value="Ribosomal_uS7_dom"/>
</dbReference>
<dbReference type="InterPro" id="IPR036823">
    <property type="entry name" value="Ribosomal_uS7_dom_sf"/>
</dbReference>
<dbReference type="NCBIfam" id="TIGR01029">
    <property type="entry name" value="rpsG_bact"/>
    <property type="match status" value="1"/>
</dbReference>
<dbReference type="PANTHER" id="PTHR11205">
    <property type="entry name" value="RIBOSOMAL PROTEIN S7"/>
    <property type="match status" value="1"/>
</dbReference>
<dbReference type="Pfam" id="PF00177">
    <property type="entry name" value="Ribosomal_S7"/>
    <property type="match status" value="1"/>
</dbReference>
<dbReference type="PIRSF" id="PIRSF002122">
    <property type="entry name" value="RPS7p_RPS7a_RPS5e_RPS7o"/>
    <property type="match status" value="1"/>
</dbReference>
<dbReference type="SUPFAM" id="SSF47973">
    <property type="entry name" value="Ribosomal protein S7"/>
    <property type="match status" value="1"/>
</dbReference>
<dbReference type="PROSITE" id="PS00052">
    <property type="entry name" value="RIBOSOMAL_S7"/>
    <property type="match status" value="1"/>
</dbReference>
<gene>
    <name evidence="1" type="primary">rpsG</name>
    <name type="ordered locus">HPP12_1161</name>
</gene>
<keyword id="KW-0687">Ribonucleoprotein</keyword>
<keyword id="KW-0689">Ribosomal protein</keyword>
<keyword id="KW-0694">RNA-binding</keyword>
<keyword id="KW-0699">rRNA-binding</keyword>
<keyword id="KW-0820">tRNA-binding</keyword>
<protein>
    <recommendedName>
        <fullName evidence="1">Small ribosomal subunit protein uS7</fullName>
    </recommendedName>
    <alternativeName>
        <fullName evidence="2">30S ribosomal protein S7</fullName>
    </alternativeName>
</protein>
<organism>
    <name type="scientific">Helicobacter pylori (strain P12)</name>
    <dbReference type="NCBI Taxonomy" id="570508"/>
    <lineage>
        <taxon>Bacteria</taxon>
        <taxon>Pseudomonadati</taxon>
        <taxon>Campylobacterota</taxon>
        <taxon>Epsilonproteobacteria</taxon>
        <taxon>Campylobacterales</taxon>
        <taxon>Helicobacteraceae</taxon>
        <taxon>Helicobacter</taxon>
    </lineage>
</organism>
<name>RS7_HELP2</name>
<comment type="function">
    <text evidence="1">One of the primary rRNA binding proteins, it binds directly to 16S rRNA where it nucleates assembly of the head domain of the 30S subunit. Is located at the subunit interface close to the decoding center, probably blocks exit of the E-site tRNA.</text>
</comment>
<comment type="subunit">
    <text evidence="1">Part of the 30S ribosomal subunit. Contacts proteins S9 and S11.</text>
</comment>
<comment type="similarity">
    <text evidence="1">Belongs to the universal ribosomal protein uS7 family.</text>
</comment>